<sequence length="236" mass="25758">MAATLLDVCAVVPAAGFGRRMQTECPKQYLSIGNKTILEHSVHALLAHPRVTRVVIAISPGDHRFAQLPLANHPQITVVDGGNERADSVLAGLQAVAEAQWVLVHDAARPCLHQDDLARLLAISENSRVGGILASPVRDTMKRGEPGKNAIAHTVERADLWHALTPQFFPRELLHDCLTRALNEGATITDEASALEYCGFHPVLVEGRADNIKVTRPEDLALAEFYLTRTIHQEKA</sequence>
<accession>C0PXA7</accession>
<comment type="function">
    <text evidence="1">Catalyzes the formation of 4-diphosphocytidyl-2-C-methyl-D-erythritol from CTP and 2-C-methyl-D-erythritol 4-phosphate (MEP).</text>
</comment>
<comment type="catalytic activity">
    <reaction evidence="1">
        <text>2-C-methyl-D-erythritol 4-phosphate + CTP + H(+) = 4-CDP-2-C-methyl-D-erythritol + diphosphate</text>
        <dbReference type="Rhea" id="RHEA:13429"/>
        <dbReference type="ChEBI" id="CHEBI:15378"/>
        <dbReference type="ChEBI" id="CHEBI:33019"/>
        <dbReference type="ChEBI" id="CHEBI:37563"/>
        <dbReference type="ChEBI" id="CHEBI:57823"/>
        <dbReference type="ChEBI" id="CHEBI:58262"/>
        <dbReference type="EC" id="2.7.7.60"/>
    </reaction>
</comment>
<comment type="pathway">
    <text evidence="1">Isoprenoid biosynthesis; isopentenyl diphosphate biosynthesis via DXP pathway; isopentenyl diphosphate from 1-deoxy-D-xylulose 5-phosphate: step 2/6.</text>
</comment>
<comment type="subunit">
    <text evidence="1">Homodimer.</text>
</comment>
<comment type="similarity">
    <text evidence="1">Belongs to the IspD/TarI cytidylyltransferase family. IspD subfamily.</text>
</comment>
<reference key="1">
    <citation type="journal article" date="2009" name="PLoS ONE">
        <title>Salmonella paratyphi C: genetic divergence from Salmonella choleraesuis and pathogenic convergence with Salmonella typhi.</title>
        <authorList>
            <person name="Liu W.-Q."/>
            <person name="Feng Y."/>
            <person name="Wang Y."/>
            <person name="Zou Q.-H."/>
            <person name="Chen F."/>
            <person name="Guo J.-T."/>
            <person name="Peng Y.-H."/>
            <person name="Jin Y."/>
            <person name="Li Y.-G."/>
            <person name="Hu S.-N."/>
            <person name="Johnston R.N."/>
            <person name="Liu G.-R."/>
            <person name="Liu S.-L."/>
        </authorList>
    </citation>
    <scope>NUCLEOTIDE SEQUENCE [LARGE SCALE GENOMIC DNA]</scope>
    <source>
        <strain>RKS4594</strain>
    </source>
</reference>
<dbReference type="EC" id="2.7.7.60" evidence="1"/>
<dbReference type="EMBL" id="CP000857">
    <property type="protein sequence ID" value="ACN47065.1"/>
    <property type="molecule type" value="Genomic_DNA"/>
</dbReference>
<dbReference type="RefSeq" id="WP_000741645.1">
    <property type="nucleotide sequence ID" value="NC_012125.1"/>
</dbReference>
<dbReference type="SMR" id="C0PXA7"/>
<dbReference type="KEGG" id="sei:SPC_2973"/>
<dbReference type="HOGENOM" id="CLU_061281_3_1_6"/>
<dbReference type="UniPathway" id="UPA00056">
    <property type="reaction ID" value="UER00093"/>
</dbReference>
<dbReference type="Proteomes" id="UP000001599">
    <property type="component" value="Chromosome"/>
</dbReference>
<dbReference type="GO" id="GO:0050518">
    <property type="term" value="F:2-C-methyl-D-erythritol 4-phosphate cytidylyltransferase activity"/>
    <property type="evidence" value="ECO:0007669"/>
    <property type="project" value="UniProtKB-UniRule"/>
</dbReference>
<dbReference type="GO" id="GO:0019288">
    <property type="term" value="P:isopentenyl diphosphate biosynthetic process, methylerythritol 4-phosphate pathway"/>
    <property type="evidence" value="ECO:0007669"/>
    <property type="project" value="UniProtKB-UniRule"/>
</dbReference>
<dbReference type="CDD" id="cd02516">
    <property type="entry name" value="CDP-ME_synthetase"/>
    <property type="match status" value="1"/>
</dbReference>
<dbReference type="FunFam" id="3.90.550.10:FF:000003">
    <property type="entry name" value="2-C-methyl-D-erythritol 4-phosphate cytidylyltransferase"/>
    <property type="match status" value="1"/>
</dbReference>
<dbReference type="Gene3D" id="3.90.550.10">
    <property type="entry name" value="Spore Coat Polysaccharide Biosynthesis Protein SpsA, Chain A"/>
    <property type="match status" value="1"/>
</dbReference>
<dbReference type="HAMAP" id="MF_00108">
    <property type="entry name" value="IspD"/>
    <property type="match status" value="1"/>
</dbReference>
<dbReference type="InterPro" id="IPR001228">
    <property type="entry name" value="IspD"/>
</dbReference>
<dbReference type="InterPro" id="IPR034683">
    <property type="entry name" value="IspD/TarI"/>
</dbReference>
<dbReference type="InterPro" id="IPR050088">
    <property type="entry name" value="IspD/TarI_cytidylyltransf_bact"/>
</dbReference>
<dbReference type="InterPro" id="IPR018294">
    <property type="entry name" value="ISPD_synthase_CS"/>
</dbReference>
<dbReference type="InterPro" id="IPR029044">
    <property type="entry name" value="Nucleotide-diphossugar_trans"/>
</dbReference>
<dbReference type="NCBIfam" id="TIGR00453">
    <property type="entry name" value="ispD"/>
    <property type="match status" value="1"/>
</dbReference>
<dbReference type="PANTHER" id="PTHR32125">
    <property type="entry name" value="2-C-METHYL-D-ERYTHRITOL 4-PHOSPHATE CYTIDYLYLTRANSFERASE, CHLOROPLASTIC"/>
    <property type="match status" value="1"/>
</dbReference>
<dbReference type="PANTHER" id="PTHR32125:SF4">
    <property type="entry name" value="2-C-METHYL-D-ERYTHRITOL 4-PHOSPHATE CYTIDYLYLTRANSFERASE, CHLOROPLASTIC"/>
    <property type="match status" value="1"/>
</dbReference>
<dbReference type="Pfam" id="PF01128">
    <property type="entry name" value="IspD"/>
    <property type="match status" value="1"/>
</dbReference>
<dbReference type="SUPFAM" id="SSF53448">
    <property type="entry name" value="Nucleotide-diphospho-sugar transferases"/>
    <property type="match status" value="1"/>
</dbReference>
<dbReference type="PROSITE" id="PS01295">
    <property type="entry name" value="ISPD"/>
    <property type="match status" value="1"/>
</dbReference>
<organism>
    <name type="scientific">Salmonella paratyphi C (strain RKS4594)</name>
    <dbReference type="NCBI Taxonomy" id="476213"/>
    <lineage>
        <taxon>Bacteria</taxon>
        <taxon>Pseudomonadati</taxon>
        <taxon>Pseudomonadota</taxon>
        <taxon>Gammaproteobacteria</taxon>
        <taxon>Enterobacterales</taxon>
        <taxon>Enterobacteriaceae</taxon>
        <taxon>Salmonella</taxon>
    </lineage>
</organism>
<keyword id="KW-0414">Isoprene biosynthesis</keyword>
<keyword id="KW-0548">Nucleotidyltransferase</keyword>
<keyword id="KW-0808">Transferase</keyword>
<gene>
    <name evidence="1" type="primary">ispD</name>
    <name type="ordered locus">SPC_2973</name>
</gene>
<feature type="chain" id="PRO_1000191068" description="2-C-methyl-D-erythritol 4-phosphate cytidylyltransferase">
    <location>
        <begin position="1"/>
        <end position="236"/>
    </location>
</feature>
<feature type="site" description="Transition state stabilizer" evidence="1">
    <location>
        <position position="20"/>
    </location>
</feature>
<feature type="site" description="Transition state stabilizer" evidence="1">
    <location>
        <position position="27"/>
    </location>
</feature>
<feature type="site" description="Positions MEP for the nucleophilic attack" evidence="1">
    <location>
        <position position="157"/>
    </location>
</feature>
<feature type="site" description="Positions MEP for the nucleophilic attack" evidence="1">
    <location>
        <position position="213"/>
    </location>
</feature>
<protein>
    <recommendedName>
        <fullName evidence="1">2-C-methyl-D-erythritol 4-phosphate cytidylyltransferase</fullName>
        <ecNumber evidence="1">2.7.7.60</ecNumber>
    </recommendedName>
    <alternativeName>
        <fullName evidence="1">4-diphosphocytidyl-2C-methyl-D-erythritol synthase</fullName>
    </alternativeName>
    <alternativeName>
        <fullName evidence="1">MEP cytidylyltransferase</fullName>
        <shortName evidence="1">MCT</shortName>
    </alternativeName>
</protein>
<proteinExistence type="inferred from homology"/>
<evidence type="ECO:0000255" key="1">
    <source>
        <dbReference type="HAMAP-Rule" id="MF_00108"/>
    </source>
</evidence>
<name>ISPD_SALPC</name>